<reference key="1">
    <citation type="submission" date="2006-08" db="EMBL/GenBank/DDBJ databases">
        <title>Complete sequence of chromosome 1 of Burkholderia cenocepacia HI2424.</title>
        <authorList>
            <person name="Copeland A."/>
            <person name="Lucas S."/>
            <person name="Lapidus A."/>
            <person name="Barry K."/>
            <person name="Detter J.C."/>
            <person name="Glavina del Rio T."/>
            <person name="Hammon N."/>
            <person name="Israni S."/>
            <person name="Pitluck S."/>
            <person name="Chain P."/>
            <person name="Malfatti S."/>
            <person name="Shin M."/>
            <person name="Vergez L."/>
            <person name="Schmutz J."/>
            <person name="Larimer F."/>
            <person name="Land M."/>
            <person name="Hauser L."/>
            <person name="Kyrpides N."/>
            <person name="Kim E."/>
            <person name="LiPuma J.J."/>
            <person name="Gonzalez C.F."/>
            <person name="Konstantinidis K."/>
            <person name="Tiedje J.M."/>
            <person name="Richardson P."/>
        </authorList>
    </citation>
    <scope>NUCLEOTIDE SEQUENCE [LARGE SCALE GENOMIC DNA]</scope>
    <source>
        <strain>HI2424</strain>
    </source>
</reference>
<name>DADA_BURCH</name>
<comment type="function">
    <text evidence="1">Oxidative deamination of D-amino acids.</text>
</comment>
<comment type="catalytic activity">
    <reaction evidence="1">
        <text>a D-alpha-amino acid + A + H2O = a 2-oxocarboxylate + AH2 + NH4(+)</text>
        <dbReference type="Rhea" id="RHEA:18125"/>
        <dbReference type="ChEBI" id="CHEBI:13193"/>
        <dbReference type="ChEBI" id="CHEBI:15377"/>
        <dbReference type="ChEBI" id="CHEBI:17499"/>
        <dbReference type="ChEBI" id="CHEBI:28938"/>
        <dbReference type="ChEBI" id="CHEBI:35179"/>
        <dbReference type="ChEBI" id="CHEBI:59871"/>
    </reaction>
</comment>
<comment type="cofactor">
    <cofactor evidence="1">
        <name>FAD</name>
        <dbReference type="ChEBI" id="CHEBI:57692"/>
    </cofactor>
</comment>
<comment type="pathway">
    <text>Amino-acid degradation; D-alanine degradation; NH(3) and pyruvate from D-alanine: step 1/1.</text>
</comment>
<comment type="similarity">
    <text evidence="1">Belongs to the DadA oxidoreductase family.</text>
</comment>
<protein>
    <recommendedName>
        <fullName evidence="1">D-amino acid dehydrogenase</fullName>
        <ecNumber evidence="1">1.4.99.-</ecNumber>
    </recommendedName>
</protein>
<evidence type="ECO:0000255" key="1">
    <source>
        <dbReference type="HAMAP-Rule" id="MF_01202"/>
    </source>
</evidence>
<feature type="chain" id="PRO_1000066073" description="D-amino acid dehydrogenase">
    <location>
        <begin position="1"/>
        <end position="428"/>
    </location>
</feature>
<feature type="binding site" evidence="1">
    <location>
        <begin position="3"/>
        <end position="17"/>
    </location>
    <ligand>
        <name>FAD</name>
        <dbReference type="ChEBI" id="CHEBI:57692"/>
    </ligand>
</feature>
<gene>
    <name evidence="1" type="primary">dadA</name>
    <name type="ordered locus">Bcen2424_1064</name>
</gene>
<organism>
    <name type="scientific">Burkholderia cenocepacia (strain HI2424)</name>
    <dbReference type="NCBI Taxonomy" id="331272"/>
    <lineage>
        <taxon>Bacteria</taxon>
        <taxon>Pseudomonadati</taxon>
        <taxon>Pseudomonadota</taxon>
        <taxon>Betaproteobacteria</taxon>
        <taxon>Burkholderiales</taxon>
        <taxon>Burkholderiaceae</taxon>
        <taxon>Burkholderia</taxon>
        <taxon>Burkholderia cepacia complex</taxon>
    </lineage>
</organism>
<sequence>MRVVILGSGVVGVASAYYLARAGHEVTVIDREAGPALETSFANAGQISPGYAAPWAAPGVPLKAVKWMFEKHAPLAIRLDGTRFQLQWMVQMLRNCTAERYAVNKGRMVRLAEYSRDCLQALRADTGIQYEGRTGGTLQLFRTQQQLDGAAKDIAVLQEANVPFELLSPAELKHAEPALAAVSHKLTGGLRLPGDETGDCQLFTTRLAALAESLGVKFRYNTPIDALAIAGGKIAGVQCGSETVRADAYVVALGSYSTNFISNLMKIPVYPLKGYSITAPIVDAAAAPVSTVLDETYKIAITRFDQRIRVGGMAEIVGFDKTLRAARRETLEMCVNDLFPGGGDTSKATFWTGLRPMTPDGTPIVGRTPVSNLFLNTGHGTLGWTMSCGSGQLLADLISGKKPAIQADDLSVHRYLKDAPGQTRPAYA</sequence>
<keyword id="KW-0274">FAD</keyword>
<keyword id="KW-0285">Flavoprotein</keyword>
<keyword id="KW-0560">Oxidoreductase</keyword>
<dbReference type="EC" id="1.4.99.-" evidence="1"/>
<dbReference type="EMBL" id="CP000458">
    <property type="protein sequence ID" value="ABK07817.1"/>
    <property type="molecule type" value="Genomic_DNA"/>
</dbReference>
<dbReference type="RefSeq" id="WP_011544898.1">
    <property type="nucleotide sequence ID" value="NC_008542.1"/>
</dbReference>
<dbReference type="SMR" id="A0K5P0"/>
<dbReference type="KEGG" id="bch:Bcen2424_1064"/>
<dbReference type="HOGENOM" id="CLU_007884_9_2_4"/>
<dbReference type="UniPathway" id="UPA00043">
    <property type="reaction ID" value="UER00498"/>
</dbReference>
<dbReference type="GO" id="GO:0005737">
    <property type="term" value="C:cytoplasm"/>
    <property type="evidence" value="ECO:0007669"/>
    <property type="project" value="TreeGrafter"/>
</dbReference>
<dbReference type="GO" id="GO:0005886">
    <property type="term" value="C:plasma membrane"/>
    <property type="evidence" value="ECO:0007669"/>
    <property type="project" value="TreeGrafter"/>
</dbReference>
<dbReference type="GO" id="GO:0008718">
    <property type="term" value="F:D-amino-acid dehydrogenase activity"/>
    <property type="evidence" value="ECO:0007669"/>
    <property type="project" value="UniProtKB-UniRule"/>
</dbReference>
<dbReference type="GO" id="GO:0055130">
    <property type="term" value="P:D-alanine catabolic process"/>
    <property type="evidence" value="ECO:0007669"/>
    <property type="project" value="UniProtKB-UniPathway"/>
</dbReference>
<dbReference type="FunFam" id="3.50.50.60:FF:000020">
    <property type="entry name" value="D-amino acid dehydrogenase"/>
    <property type="match status" value="1"/>
</dbReference>
<dbReference type="Gene3D" id="3.30.9.10">
    <property type="entry name" value="D-Amino Acid Oxidase, subunit A, domain 2"/>
    <property type="match status" value="1"/>
</dbReference>
<dbReference type="Gene3D" id="3.50.50.60">
    <property type="entry name" value="FAD/NAD(P)-binding domain"/>
    <property type="match status" value="2"/>
</dbReference>
<dbReference type="HAMAP" id="MF_01202">
    <property type="entry name" value="DadA"/>
    <property type="match status" value="1"/>
</dbReference>
<dbReference type="InterPro" id="IPR023080">
    <property type="entry name" value="DadA"/>
</dbReference>
<dbReference type="InterPro" id="IPR006076">
    <property type="entry name" value="FAD-dep_OxRdtase"/>
</dbReference>
<dbReference type="InterPro" id="IPR036188">
    <property type="entry name" value="FAD/NAD-bd_sf"/>
</dbReference>
<dbReference type="NCBIfam" id="NF001933">
    <property type="entry name" value="PRK00711.1"/>
    <property type="match status" value="1"/>
</dbReference>
<dbReference type="PANTHER" id="PTHR13847:SF280">
    <property type="entry name" value="D-AMINO ACID DEHYDROGENASE"/>
    <property type="match status" value="1"/>
</dbReference>
<dbReference type="PANTHER" id="PTHR13847">
    <property type="entry name" value="SARCOSINE DEHYDROGENASE-RELATED"/>
    <property type="match status" value="1"/>
</dbReference>
<dbReference type="Pfam" id="PF01266">
    <property type="entry name" value="DAO"/>
    <property type="match status" value="1"/>
</dbReference>
<dbReference type="SUPFAM" id="SSF54373">
    <property type="entry name" value="FAD-linked reductases, C-terminal domain"/>
    <property type="match status" value="1"/>
</dbReference>
<dbReference type="SUPFAM" id="SSF51905">
    <property type="entry name" value="FAD/NAD(P)-binding domain"/>
    <property type="match status" value="1"/>
</dbReference>
<proteinExistence type="inferred from homology"/>
<accession>A0K5P0</accession>